<evidence type="ECO:0000255" key="1">
    <source>
        <dbReference type="HAMAP-Rule" id="MF_00693"/>
    </source>
</evidence>
<dbReference type="EMBL" id="CP000393">
    <property type="protein sequence ID" value="ABG51360.1"/>
    <property type="molecule type" value="Genomic_DNA"/>
</dbReference>
<dbReference type="RefSeq" id="WP_011611730.1">
    <property type="nucleotide sequence ID" value="NC_008312.1"/>
</dbReference>
<dbReference type="SMR" id="Q113G4"/>
<dbReference type="STRING" id="203124.Tery_2125"/>
<dbReference type="KEGG" id="ter:Tery_2125"/>
<dbReference type="eggNOG" id="COG0217">
    <property type="taxonomic scope" value="Bacteria"/>
</dbReference>
<dbReference type="HOGENOM" id="CLU_062974_2_2_3"/>
<dbReference type="OrthoDB" id="9781053at2"/>
<dbReference type="GO" id="GO:0005829">
    <property type="term" value="C:cytosol"/>
    <property type="evidence" value="ECO:0007669"/>
    <property type="project" value="TreeGrafter"/>
</dbReference>
<dbReference type="GO" id="GO:0003677">
    <property type="term" value="F:DNA binding"/>
    <property type="evidence" value="ECO:0007669"/>
    <property type="project" value="UniProtKB-UniRule"/>
</dbReference>
<dbReference type="GO" id="GO:0006355">
    <property type="term" value="P:regulation of DNA-templated transcription"/>
    <property type="evidence" value="ECO:0007669"/>
    <property type="project" value="UniProtKB-UniRule"/>
</dbReference>
<dbReference type="FunFam" id="1.10.10.200:FF:000002">
    <property type="entry name" value="Probable transcriptional regulatory protein CLM62_37755"/>
    <property type="match status" value="1"/>
</dbReference>
<dbReference type="Gene3D" id="1.10.10.200">
    <property type="match status" value="1"/>
</dbReference>
<dbReference type="Gene3D" id="3.30.70.980">
    <property type="match status" value="2"/>
</dbReference>
<dbReference type="HAMAP" id="MF_00693">
    <property type="entry name" value="Transcrip_reg_TACO1"/>
    <property type="match status" value="1"/>
</dbReference>
<dbReference type="InterPro" id="IPR017856">
    <property type="entry name" value="Integrase-like_N"/>
</dbReference>
<dbReference type="InterPro" id="IPR048300">
    <property type="entry name" value="TACO1_YebC-like_2nd/3rd_dom"/>
</dbReference>
<dbReference type="InterPro" id="IPR049083">
    <property type="entry name" value="TACO1_YebC_N"/>
</dbReference>
<dbReference type="InterPro" id="IPR002876">
    <property type="entry name" value="Transcrip_reg_TACO1-like"/>
</dbReference>
<dbReference type="InterPro" id="IPR026564">
    <property type="entry name" value="Transcrip_reg_TACO1-like_dom3"/>
</dbReference>
<dbReference type="InterPro" id="IPR029072">
    <property type="entry name" value="YebC-like"/>
</dbReference>
<dbReference type="NCBIfam" id="NF001030">
    <property type="entry name" value="PRK00110.1"/>
    <property type="match status" value="1"/>
</dbReference>
<dbReference type="NCBIfam" id="NF009044">
    <property type="entry name" value="PRK12378.1"/>
    <property type="match status" value="1"/>
</dbReference>
<dbReference type="NCBIfam" id="TIGR01033">
    <property type="entry name" value="YebC/PmpR family DNA-binding transcriptional regulator"/>
    <property type="match status" value="1"/>
</dbReference>
<dbReference type="PANTHER" id="PTHR12532:SF6">
    <property type="entry name" value="TRANSCRIPTIONAL REGULATORY PROTEIN YEBC-RELATED"/>
    <property type="match status" value="1"/>
</dbReference>
<dbReference type="PANTHER" id="PTHR12532">
    <property type="entry name" value="TRANSLATIONAL ACTIVATOR OF CYTOCHROME C OXIDASE 1"/>
    <property type="match status" value="1"/>
</dbReference>
<dbReference type="Pfam" id="PF20772">
    <property type="entry name" value="TACO1_YebC_N"/>
    <property type="match status" value="1"/>
</dbReference>
<dbReference type="Pfam" id="PF01709">
    <property type="entry name" value="Transcrip_reg"/>
    <property type="match status" value="1"/>
</dbReference>
<dbReference type="SUPFAM" id="SSF75625">
    <property type="entry name" value="YebC-like"/>
    <property type="match status" value="1"/>
</dbReference>
<gene>
    <name type="ordered locus">Tery_2125</name>
</gene>
<organism>
    <name type="scientific">Trichodesmium erythraeum (strain IMS101)</name>
    <dbReference type="NCBI Taxonomy" id="203124"/>
    <lineage>
        <taxon>Bacteria</taxon>
        <taxon>Bacillati</taxon>
        <taxon>Cyanobacteriota</taxon>
        <taxon>Cyanophyceae</taxon>
        <taxon>Oscillatoriophycideae</taxon>
        <taxon>Oscillatoriales</taxon>
        <taxon>Microcoleaceae</taxon>
        <taxon>Trichodesmium</taxon>
    </lineage>
</organism>
<comment type="subcellular location">
    <subcellularLocation>
        <location evidence="1">Cytoplasm</location>
    </subcellularLocation>
</comment>
<comment type="similarity">
    <text evidence="1">Belongs to the TACO1 family.</text>
</comment>
<keyword id="KW-0963">Cytoplasm</keyword>
<keyword id="KW-0238">DNA-binding</keyword>
<keyword id="KW-0804">Transcription</keyword>
<keyword id="KW-0805">Transcription regulation</keyword>
<protein>
    <recommendedName>
        <fullName evidence="1">Probable transcriptional regulatory protein Tery_2125</fullName>
    </recommendedName>
</protein>
<sequence>MAGHSKWANIKRQKARVDAVKGKVFAKVSRQIIVAARSGADPAGNFQLRTAIEKAKTVGIPNDNIERAIAKGSGQLNDGSQLEEIRYEGYGAGGIAIIIEALTDNRNRTAADLRSAFTKNGGNLGETGCVSWMFDQKGVVSITGSYDEDELLEASVEGEAEYYEVIAEDDFQGVEVFTETTNLENLSQVLQEKGFDISEVEFRWVSAHTIEVSDPEQARSLLKLMDALDDLDDVQNITANFDIANKLLKTLAS</sequence>
<reference key="1">
    <citation type="journal article" date="2015" name="Proc. Natl. Acad. Sci. U.S.A.">
        <title>Trichodesmium genome maintains abundant, widespread noncoding DNA in situ, despite oligotrophic lifestyle.</title>
        <authorList>
            <person name="Walworth N."/>
            <person name="Pfreundt U."/>
            <person name="Nelson W.C."/>
            <person name="Mincer T."/>
            <person name="Heidelberg J.F."/>
            <person name="Fu F."/>
            <person name="Waterbury J.B."/>
            <person name="Glavina del Rio T."/>
            <person name="Goodwin L."/>
            <person name="Kyrpides N.C."/>
            <person name="Land M.L."/>
            <person name="Woyke T."/>
            <person name="Hutchins D.A."/>
            <person name="Hess W.R."/>
            <person name="Webb E.A."/>
        </authorList>
    </citation>
    <scope>NUCLEOTIDE SEQUENCE [LARGE SCALE GENOMIC DNA]</scope>
    <source>
        <strain>IMS101</strain>
    </source>
</reference>
<proteinExistence type="inferred from homology"/>
<feature type="chain" id="PRO_1000045389" description="Probable transcriptional regulatory protein Tery_2125">
    <location>
        <begin position="1"/>
        <end position="253"/>
    </location>
</feature>
<accession>Q113G4</accession>
<name>Y2125_TRIEI</name>